<accession>Q6FV37</accession>
<organism>
    <name type="scientific">Candida glabrata (strain ATCC 2001 / BCRC 20586 / JCM 3761 / NBRC 0622 / NRRL Y-65 / CBS 138)</name>
    <name type="common">Yeast</name>
    <name type="synonym">Nakaseomyces glabratus</name>
    <dbReference type="NCBI Taxonomy" id="284593"/>
    <lineage>
        <taxon>Eukaryota</taxon>
        <taxon>Fungi</taxon>
        <taxon>Dikarya</taxon>
        <taxon>Ascomycota</taxon>
        <taxon>Saccharomycotina</taxon>
        <taxon>Saccharomycetes</taxon>
        <taxon>Saccharomycetales</taxon>
        <taxon>Saccharomycetaceae</taxon>
        <taxon>Nakaseomyces</taxon>
    </lineage>
</organism>
<protein>
    <recommendedName>
        <fullName evidence="1">Chromatin-remodeling ATPase INO80</fullName>
        <ecNumber evidence="1">3.6.4.-</ecNumber>
    </recommendedName>
</protein>
<comment type="function">
    <text evidence="6">ATPase component of the INO80 complex which remodels chromatin by shifting nucleosomes and is involved in DNA repair.</text>
</comment>
<comment type="catalytic activity">
    <reaction evidence="1">
        <text>ATP + H2O = ADP + phosphate + H(+)</text>
        <dbReference type="Rhea" id="RHEA:13065"/>
        <dbReference type="ChEBI" id="CHEBI:15377"/>
        <dbReference type="ChEBI" id="CHEBI:15378"/>
        <dbReference type="ChEBI" id="CHEBI:30616"/>
        <dbReference type="ChEBI" id="CHEBI:43474"/>
        <dbReference type="ChEBI" id="CHEBI:456216"/>
    </reaction>
</comment>
<comment type="subunit">
    <text evidence="6">Component of the INO80 chromatin-remodeling complex.</text>
</comment>
<comment type="subcellular location">
    <subcellularLocation>
        <location evidence="6">Nucleus</location>
    </subcellularLocation>
</comment>
<comment type="domain">
    <text evidence="2">The DBINO region is involved in binding to DNA.</text>
</comment>
<comment type="similarity">
    <text evidence="8">Belongs to the SNF2/RAD54 helicase family.</text>
</comment>
<gene>
    <name type="primary">INO80</name>
    <name type="ordered locus">CAGL0E05038g</name>
</gene>
<feature type="chain" id="PRO_0000074321" description="Chromatin-remodeling ATPase INO80">
    <location>
        <begin position="1"/>
        <end position="1484"/>
    </location>
</feature>
<feature type="domain" description="DBINO" evidence="6">
    <location>
        <begin position="493"/>
        <end position="618"/>
    </location>
</feature>
<feature type="domain" description="Helicase ATP-binding" evidence="4">
    <location>
        <begin position="734"/>
        <end position="906"/>
    </location>
</feature>
<feature type="domain" description="Helicase C-terminal" evidence="5">
    <location>
        <begin position="1299"/>
        <end position="1463"/>
    </location>
</feature>
<feature type="region of interest" description="Disordered" evidence="7">
    <location>
        <begin position="149"/>
        <end position="193"/>
    </location>
</feature>
<feature type="region of interest" description="Disordered" evidence="7">
    <location>
        <begin position="237"/>
        <end position="353"/>
    </location>
</feature>
<feature type="region of interest" description="Disordered" evidence="7">
    <location>
        <begin position="426"/>
        <end position="466"/>
    </location>
</feature>
<feature type="region of interest" description="Disordered" evidence="7">
    <location>
        <begin position="673"/>
        <end position="702"/>
    </location>
</feature>
<feature type="region of interest" description="Disordered" evidence="7">
    <location>
        <begin position="1446"/>
        <end position="1484"/>
    </location>
</feature>
<feature type="coiled-coil region" evidence="3">
    <location>
        <begin position="404"/>
        <end position="462"/>
    </location>
</feature>
<feature type="short sequence motif" description="DEAQ box">
    <location>
        <begin position="857"/>
        <end position="860"/>
    </location>
</feature>
<feature type="compositionally biased region" description="Basic and acidic residues" evidence="7">
    <location>
        <begin position="155"/>
        <end position="171"/>
    </location>
</feature>
<feature type="compositionally biased region" description="Polar residues" evidence="7">
    <location>
        <begin position="172"/>
        <end position="187"/>
    </location>
</feature>
<feature type="compositionally biased region" description="Polar residues" evidence="7">
    <location>
        <begin position="241"/>
        <end position="250"/>
    </location>
</feature>
<feature type="compositionally biased region" description="Polar residues" evidence="7">
    <location>
        <begin position="261"/>
        <end position="285"/>
    </location>
</feature>
<feature type="compositionally biased region" description="Basic and acidic residues" evidence="7">
    <location>
        <begin position="286"/>
        <end position="295"/>
    </location>
</feature>
<feature type="compositionally biased region" description="Basic and acidic residues" evidence="7">
    <location>
        <begin position="426"/>
        <end position="439"/>
    </location>
</feature>
<feature type="compositionally biased region" description="Acidic residues" evidence="7">
    <location>
        <begin position="454"/>
        <end position="465"/>
    </location>
</feature>
<feature type="compositionally biased region" description="Basic and acidic residues" evidence="7">
    <location>
        <begin position="674"/>
        <end position="686"/>
    </location>
</feature>
<feature type="compositionally biased region" description="Polar residues" evidence="7">
    <location>
        <begin position="1465"/>
        <end position="1484"/>
    </location>
</feature>
<feature type="binding site" evidence="4">
    <location>
        <begin position="747"/>
        <end position="754"/>
    </location>
    <ligand>
        <name>ATP</name>
        <dbReference type="ChEBI" id="CHEBI:30616"/>
    </ligand>
</feature>
<name>INO80_CANGA</name>
<evidence type="ECO:0000250" key="1">
    <source>
        <dbReference type="UniProtKB" id="P53115"/>
    </source>
</evidence>
<evidence type="ECO:0000250" key="2">
    <source>
        <dbReference type="UniProtKB" id="Q9ULG1"/>
    </source>
</evidence>
<evidence type="ECO:0000255" key="3"/>
<evidence type="ECO:0000255" key="4">
    <source>
        <dbReference type="PROSITE-ProRule" id="PRU00541"/>
    </source>
</evidence>
<evidence type="ECO:0000255" key="5">
    <source>
        <dbReference type="PROSITE-ProRule" id="PRU00542"/>
    </source>
</evidence>
<evidence type="ECO:0000255" key="6">
    <source>
        <dbReference type="PROSITE-ProRule" id="PRU00746"/>
    </source>
</evidence>
<evidence type="ECO:0000256" key="7">
    <source>
        <dbReference type="SAM" id="MobiDB-lite"/>
    </source>
</evidence>
<evidence type="ECO:0000305" key="8"/>
<keyword id="KW-0010">Activator</keyword>
<keyword id="KW-0067">ATP-binding</keyword>
<keyword id="KW-0175">Coiled coil</keyword>
<keyword id="KW-0227">DNA damage</keyword>
<keyword id="KW-0234">DNA repair</keyword>
<keyword id="KW-0238">DNA-binding</keyword>
<keyword id="KW-0378">Hydrolase</keyword>
<keyword id="KW-0547">Nucleotide-binding</keyword>
<keyword id="KW-0539">Nucleus</keyword>
<keyword id="KW-1185">Reference proteome</keyword>
<keyword id="KW-0804">Transcription</keyword>
<keyword id="KW-0805">Transcription regulation</keyword>
<sequence length="1484" mass="170540">MSLSALLNNDDPVEDTKLYLESLNREMDRLIKRDQLELMYQDWKFANYQEFELISEWNTQCKELVGDGNDLQNNDLMTEEVHLDDLYDNIQRIRNEWKDYESYKETRSQLLSKSIQAKPIKHRRRRRTKLEMEAAANLAALSQMGTTDVKTPEIINDHGNRSKASRSDTTNKTDNTMAGINSPTSDVDSGHKDELDQTKLIKKQEASSSTNSAASVTASVANGIVEDQKDEAERTIEANRIGSNMQNSDQDTMDDLKKTNDPSSDIDSDANTSVNDGSDENLSNKLDSDDLHSEPADNEEEPVSSDAEKDQAENINQTDESEEEIIVKEYDDNNDEDFAPEIKKPKPNGKIVTINSDRPKIVRELIKLRNKGKAPKSSKRRYTAVNITEYSPTEKKISVKITLKQMHVKKLKKILQDARKAEEKRLQEEAKQIADQESPRKRRKIDRSENTKQEDEDDKEDDDLDGLPTYGMKMSLKDAKAIQRHYDNTYTMIWKDMARKDCMKISRLVQQIQSTRALNYKKTSSLCAREARKWQTRNFKQVKDFQTRARKGIREMANFWKKNEREERDLKKKAEREALELAKKEEEEKESKRQAKKLNFLLTQTELYSHFIGRKIKTSALEGNEVAEEDEDNYDLTTTAPNKNDFHAIDFDNENDEQLKLKAAQNASNALAETRAKAKAFDDAHRQQQSTESDDEEEMNFQNPTSLGEITIEQPKMLACTLKEYQLKGLNWLANLYDQGINGILADEMGLGKTVQSISVLAHLAEHHNIWGPFLVVTPASTLHNWVNEISKFVPQFKILPYWGSANDRKVLRKFWDRKNLRYSEKSPFHVMITSYQMVVADASYLQKMKWQYMILDEAQAIKSSQSSRWKNLLSFHCRNRLLLTGTPIQNNMQELWALLHFIMPSLFDSHDEFNEWFSRDIESHAEGNSSLNQQQLRRLHMILKPFMLRRIKKNVQSELGDKIEIDVMCDLTQRQTKLYQVLKSQMSSNYDAIENAAAEGSDIAGGGNSDQSIINAVMQFRKVCNHPDLFERADINSPFSFTSFGKTSSLISSSIATSGGLTETISELMYSSTNPINCAIPKLIYEDLILPNYNNSIDIMEKLLLSDFSIYDPVNNKEMCQYLGLLTGLAYGSFRKIHKSNYFERIINLKKESKQSSQNLITVVSNANDLIADSIVHADTNLPNLTGIRNDIYHNDYLNSIQPGYCPKVVAPPINFNVNGSLNFTNKMSSYLFNPVITTALSSIPPPTQYNMFVKKCIPIEEFPISEMYPNPLNKHFSSNISMPSMDRFITESAKLKKLDELLVELKKNDHRVLIYFQMTKMMDLMEEYLTYRQYNHIRLDGSSKLEDRRDLVHDWQTNPEIFIFLLSTRAGGLGINLTAADTVIFYDSDWNPTIDSQAMDRAHRLGQTKQVTVYRLLVRGTIEERMRDRAKQKEQVQQVVMEGKTKDTNIQTTHTRPEHEQLTPKSLSSEPEATNNLITVKN</sequence>
<proteinExistence type="inferred from homology"/>
<dbReference type="EC" id="3.6.4.-" evidence="1"/>
<dbReference type="EMBL" id="CR380951">
    <property type="protein sequence ID" value="CAG58826.1"/>
    <property type="molecule type" value="Genomic_DNA"/>
</dbReference>
<dbReference type="RefSeq" id="XP_445907.1">
    <property type="nucleotide sequence ID" value="XM_445907.1"/>
</dbReference>
<dbReference type="SMR" id="Q6FV37"/>
<dbReference type="FunCoup" id="Q6FV37">
    <property type="interactions" value="1208"/>
</dbReference>
<dbReference type="STRING" id="284593.Q6FV37"/>
<dbReference type="EnsemblFungi" id="CAGL0E05038g-T">
    <property type="protein sequence ID" value="CAGL0E05038g-T-p1"/>
    <property type="gene ID" value="CAGL0E05038g"/>
</dbReference>
<dbReference type="KEGG" id="cgr:2887378"/>
<dbReference type="CGD" id="CAL0128574">
    <property type="gene designation" value="INO80"/>
</dbReference>
<dbReference type="VEuPathDB" id="FungiDB:CAGL0E05038g"/>
<dbReference type="eggNOG" id="KOG0388">
    <property type="taxonomic scope" value="Eukaryota"/>
</dbReference>
<dbReference type="HOGENOM" id="CLU_000315_26_2_1"/>
<dbReference type="InParanoid" id="Q6FV37"/>
<dbReference type="OMA" id="FWKKNER"/>
<dbReference type="Proteomes" id="UP000002428">
    <property type="component" value="Chromosome E"/>
</dbReference>
<dbReference type="GO" id="GO:0000775">
    <property type="term" value="C:chromosome, centromeric region"/>
    <property type="evidence" value="ECO:0007669"/>
    <property type="project" value="EnsemblFungi"/>
</dbReference>
<dbReference type="GO" id="GO:0000781">
    <property type="term" value="C:chromosome, telomeric region"/>
    <property type="evidence" value="ECO:0007669"/>
    <property type="project" value="GOC"/>
</dbReference>
<dbReference type="GO" id="GO:0031011">
    <property type="term" value="C:Ino80 complex"/>
    <property type="evidence" value="ECO:0007669"/>
    <property type="project" value="EnsemblFungi"/>
</dbReference>
<dbReference type="GO" id="GO:0005524">
    <property type="term" value="F:ATP binding"/>
    <property type="evidence" value="ECO:0007669"/>
    <property type="project" value="UniProtKB-KW"/>
</dbReference>
<dbReference type="GO" id="GO:0016887">
    <property type="term" value="F:ATP hydrolysis activity"/>
    <property type="evidence" value="ECO:0007669"/>
    <property type="project" value="EnsemblFungi"/>
</dbReference>
<dbReference type="GO" id="GO:0140658">
    <property type="term" value="F:ATP-dependent chromatin remodeler activity"/>
    <property type="evidence" value="ECO:0007669"/>
    <property type="project" value="InterPro"/>
</dbReference>
<dbReference type="GO" id="GO:0003677">
    <property type="term" value="F:DNA binding"/>
    <property type="evidence" value="ECO:0007669"/>
    <property type="project" value="UniProtKB-KW"/>
</dbReference>
<dbReference type="GO" id="GO:0042393">
    <property type="term" value="F:histone binding"/>
    <property type="evidence" value="ECO:0007669"/>
    <property type="project" value="TreeGrafter"/>
</dbReference>
<dbReference type="GO" id="GO:0034080">
    <property type="term" value="P:CENP-A containing chromatin assembly"/>
    <property type="evidence" value="ECO:0007669"/>
    <property type="project" value="EnsemblFungi"/>
</dbReference>
<dbReference type="GO" id="GO:0006281">
    <property type="term" value="P:DNA repair"/>
    <property type="evidence" value="ECO:0007669"/>
    <property type="project" value="UniProtKB-KW"/>
</dbReference>
<dbReference type="GO" id="GO:0045944">
    <property type="term" value="P:positive regulation of transcription by RNA polymerase II"/>
    <property type="evidence" value="ECO:0007669"/>
    <property type="project" value="EnsemblFungi"/>
</dbReference>
<dbReference type="GO" id="GO:0032006">
    <property type="term" value="P:regulation of TOR signaling"/>
    <property type="evidence" value="ECO:0007669"/>
    <property type="project" value="EnsemblFungi"/>
</dbReference>
<dbReference type="GO" id="GO:0031509">
    <property type="term" value="P:subtelomeric heterochromatin formation"/>
    <property type="evidence" value="ECO:0007669"/>
    <property type="project" value="EnsemblFungi"/>
</dbReference>
<dbReference type="GO" id="GO:0000722">
    <property type="term" value="P:telomere maintenance via recombination"/>
    <property type="evidence" value="ECO:0007669"/>
    <property type="project" value="EnsemblFungi"/>
</dbReference>
<dbReference type="GO" id="GO:0006366">
    <property type="term" value="P:transcription by RNA polymerase II"/>
    <property type="evidence" value="ECO:0007669"/>
    <property type="project" value="EnsemblFungi"/>
</dbReference>
<dbReference type="CDD" id="cd18002">
    <property type="entry name" value="DEXQc_INO80"/>
    <property type="match status" value="1"/>
</dbReference>
<dbReference type="CDD" id="cd18793">
    <property type="entry name" value="SF2_C_SNF"/>
    <property type="match status" value="1"/>
</dbReference>
<dbReference type="FunFam" id="3.40.50.10810:FF:000022">
    <property type="entry name" value="Blast:Putative DNA helicase Ino80"/>
    <property type="match status" value="1"/>
</dbReference>
<dbReference type="FunFam" id="3.40.50.300:FF:001269">
    <property type="entry name" value="SNF2 family helicase/ATPase"/>
    <property type="match status" value="1"/>
</dbReference>
<dbReference type="Gene3D" id="3.40.50.300">
    <property type="entry name" value="P-loop containing nucleotide triphosphate hydrolases"/>
    <property type="match status" value="1"/>
</dbReference>
<dbReference type="Gene3D" id="3.40.50.10810">
    <property type="entry name" value="Tandem AAA-ATPase domain"/>
    <property type="match status" value="1"/>
</dbReference>
<dbReference type="InterPro" id="IPR020838">
    <property type="entry name" value="DBINO"/>
</dbReference>
<dbReference type="InterPro" id="IPR031047">
    <property type="entry name" value="DEXQc_INO80"/>
</dbReference>
<dbReference type="InterPro" id="IPR014001">
    <property type="entry name" value="Helicase_ATP-bd"/>
</dbReference>
<dbReference type="InterPro" id="IPR001650">
    <property type="entry name" value="Helicase_C-like"/>
</dbReference>
<dbReference type="InterPro" id="IPR050520">
    <property type="entry name" value="INO80/SWR1_helicase"/>
</dbReference>
<dbReference type="InterPro" id="IPR027417">
    <property type="entry name" value="P-loop_NTPase"/>
</dbReference>
<dbReference type="InterPro" id="IPR038718">
    <property type="entry name" value="SNF2-like_sf"/>
</dbReference>
<dbReference type="InterPro" id="IPR049730">
    <property type="entry name" value="SNF2/RAD54-like_C"/>
</dbReference>
<dbReference type="InterPro" id="IPR000330">
    <property type="entry name" value="SNF2_N"/>
</dbReference>
<dbReference type="PANTHER" id="PTHR45685:SF2">
    <property type="entry name" value="CHROMATIN-REMODELING ATPASE INO80"/>
    <property type="match status" value="1"/>
</dbReference>
<dbReference type="PANTHER" id="PTHR45685">
    <property type="entry name" value="HELICASE SRCAP-RELATED"/>
    <property type="match status" value="1"/>
</dbReference>
<dbReference type="Pfam" id="PF13892">
    <property type="entry name" value="DBINO"/>
    <property type="match status" value="1"/>
</dbReference>
<dbReference type="Pfam" id="PF00271">
    <property type="entry name" value="Helicase_C"/>
    <property type="match status" value="1"/>
</dbReference>
<dbReference type="Pfam" id="PF00176">
    <property type="entry name" value="SNF2-rel_dom"/>
    <property type="match status" value="1"/>
</dbReference>
<dbReference type="SMART" id="SM00487">
    <property type="entry name" value="DEXDc"/>
    <property type="match status" value="1"/>
</dbReference>
<dbReference type="SMART" id="SM00490">
    <property type="entry name" value="HELICc"/>
    <property type="match status" value="1"/>
</dbReference>
<dbReference type="SUPFAM" id="SSF52540">
    <property type="entry name" value="P-loop containing nucleoside triphosphate hydrolases"/>
    <property type="match status" value="2"/>
</dbReference>
<dbReference type="PROSITE" id="PS51413">
    <property type="entry name" value="DBINO"/>
    <property type="match status" value="1"/>
</dbReference>
<dbReference type="PROSITE" id="PS51192">
    <property type="entry name" value="HELICASE_ATP_BIND_1"/>
    <property type="match status" value="1"/>
</dbReference>
<dbReference type="PROSITE" id="PS51194">
    <property type="entry name" value="HELICASE_CTER"/>
    <property type="match status" value="1"/>
</dbReference>
<reference key="1">
    <citation type="journal article" date="2004" name="Nature">
        <title>Genome evolution in yeasts.</title>
        <authorList>
            <person name="Dujon B."/>
            <person name="Sherman D."/>
            <person name="Fischer G."/>
            <person name="Durrens P."/>
            <person name="Casaregola S."/>
            <person name="Lafontaine I."/>
            <person name="de Montigny J."/>
            <person name="Marck C."/>
            <person name="Neuveglise C."/>
            <person name="Talla E."/>
            <person name="Goffard N."/>
            <person name="Frangeul L."/>
            <person name="Aigle M."/>
            <person name="Anthouard V."/>
            <person name="Babour A."/>
            <person name="Barbe V."/>
            <person name="Barnay S."/>
            <person name="Blanchin S."/>
            <person name="Beckerich J.-M."/>
            <person name="Beyne E."/>
            <person name="Bleykasten C."/>
            <person name="Boisrame A."/>
            <person name="Boyer J."/>
            <person name="Cattolico L."/>
            <person name="Confanioleri F."/>
            <person name="de Daruvar A."/>
            <person name="Despons L."/>
            <person name="Fabre E."/>
            <person name="Fairhead C."/>
            <person name="Ferry-Dumazet H."/>
            <person name="Groppi A."/>
            <person name="Hantraye F."/>
            <person name="Hennequin C."/>
            <person name="Jauniaux N."/>
            <person name="Joyet P."/>
            <person name="Kachouri R."/>
            <person name="Kerrest A."/>
            <person name="Koszul R."/>
            <person name="Lemaire M."/>
            <person name="Lesur I."/>
            <person name="Ma L."/>
            <person name="Muller H."/>
            <person name="Nicaud J.-M."/>
            <person name="Nikolski M."/>
            <person name="Oztas S."/>
            <person name="Ozier-Kalogeropoulos O."/>
            <person name="Pellenz S."/>
            <person name="Potier S."/>
            <person name="Richard G.-F."/>
            <person name="Straub M.-L."/>
            <person name="Suleau A."/>
            <person name="Swennen D."/>
            <person name="Tekaia F."/>
            <person name="Wesolowski-Louvel M."/>
            <person name="Westhof E."/>
            <person name="Wirth B."/>
            <person name="Zeniou-Meyer M."/>
            <person name="Zivanovic Y."/>
            <person name="Bolotin-Fukuhara M."/>
            <person name="Thierry A."/>
            <person name="Bouchier C."/>
            <person name="Caudron B."/>
            <person name="Scarpelli C."/>
            <person name="Gaillardin C."/>
            <person name="Weissenbach J."/>
            <person name="Wincker P."/>
            <person name="Souciet J.-L."/>
        </authorList>
    </citation>
    <scope>NUCLEOTIDE SEQUENCE [LARGE SCALE GENOMIC DNA]</scope>
    <source>
        <strain>ATCC 2001 / BCRC 20586 / JCM 3761 / NBRC 0622 / NRRL Y-65 / CBS 138</strain>
    </source>
</reference>